<name>GUAAB_SACI7</name>
<dbReference type="EC" id="6.3.5.2" evidence="1"/>
<dbReference type="EMBL" id="CP001403">
    <property type="protein sequence ID" value="ACP46510.1"/>
    <property type="molecule type" value="Genomic_DNA"/>
</dbReference>
<dbReference type="RefSeq" id="WP_012712098.1">
    <property type="nucleotide sequence ID" value="NC_012622.1"/>
</dbReference>
<dbReference type="SMR" id="C3N905"/>
<dbReference type="KEGG" id="siy:YG5714_2261"/>
<dbReference type="HOGENOM" id="CLU_014340_0_0_2"/>
<dbReference type="UniPathway" id="UPA00189">
    <property type="reaction ID" value="UER00296"/>
</dbReference>
<dbReference type="Proteomes" id="UP000002308">
    <property type="component" value="Chromosome"/>
</dbReference>
<dbReference type="GO" id="GO:0005829">
    <property type="term" value="C:cytosol"/>
    <property type="evidence" value="ECO:0007669"/>
    <property type="project" value="TreeGrafter"/>
</dbReference>
<dbReference type="GO" id="GO:0005524">
    <property type="term" value="F:ATP binding"/>
    <property type="evidence" value="ECO:0007669"/>
    <property type="project" value="UniProtKB-UniRule"/>
</dbReference>
<dbReference type="GO" id="GO:0003921">
    <property type="term" value="F:GMP synthase activity"/>
    <property type="evidence" value="ECO:0007669"/>
    <property type="project" value="InterPro"/>
</dbReference>
<dbReference type="CDD" id="cd01997">
    <property type="entry name" value="GMP_synthase_C"/>
    <property type="match status" value="1"/>
</dbReference>
<dbReference type="Gene3D" id="3.30.300.10">
    <property type="match status" value="2"/>
</dbReference>
<dbReference type="Gene3D" id="3.40.50.620">
    <property type="entry name" value="HUPs"/>
    <property type="match status" value="1"/>
</dbReference>
<dbReference type="HAMAP" id="MF_00345">
    <property type="entry name" value="GMP_synthase_B"/>
    <property type="match status" value="1"/>
</dbReference>
<dbReference type="InterPro" id="IPR001674">
    <property type="entry name" value="GMP_synth_C"/>
</dbReference>
<dbReference type="InterPro" id="IPR026598">
    <property type="entry name" value="GMP_synthase_B"/>
</dbReference>
<dbReference type="InterPro" id="IPR025777">
    <property type="entry name" value="GMPS_ATP_PPase_dom"/>
</dbReference>
<dbReference type="InterPro" id="IPR022310">
    <property type="entry name" value="NAD/GMP_synthase"/>
</dbReference>
<dbReference type="InterPro" id="IPR014729">
    <property type="entry name" value="Rossmann-like_a/b/a_fold"/>
</dbReference>
<dbReference type="PANTHER" id="PTHR11922:SF2">
    <property type="entry name" value="GMP SYNTHASE [GLUTAMINE-HYDROLYZING]"/>
    <property type="match status" value="1"/>
</dbReference>
<dbReference type="PANTHER" id="PTHR11922">
    <property type="entry name" value="GMP SYNTHASE-RELATED"/>
    <property type="match status" value="1"/>
</dbReference>
<dbReference type="Pfam" id="PF00958">
    <property type="entry name" value="GMP_synt_C"/>
    <property type="match status" value="1"/>
</dbReference>
<dbReference type="Pfam" id="PF02540">
    <property type="entry name" value="NAD_synthase"/>
    <property type="match status" value="1"/>
</dbReference>
<dbReference type="SUPFAM" id="SSF52402">
    <property type="entry name" value="Adenine nucleotide alpha hydrolases-like"/>
    <property type="match status" value="1"/>
</dbReference>
<dbReference type="SUPFAM" id="SSF54810">
    <property type="entry name" value="GMP synthetase C-terminal dimerisation domain"/>
    <property type="match status" value="1"/>
</dbReference>
<dbReference type="PROSITE" id="PS51553">
    <property type="entry name" value="GMPS_ATP_PPASE"/>
    <property type="match status" value="1"/>
</dbReference>
<proteinExistence type="inferred from homology"/>
<accession>C3N905</accession>
<evidence type="ECO:0000255" key="1">
    <source>
        <dbReference type="HAMAP-Rule" id="MF_00345"/>
    </source>
</evidence>
<keyword id="KW-0067">ATP-binding</keyword>
<keyword id="KW-0332">GMP biosynthesis</keyword>
<keyword id="KW-0436">Ligase</keyword>
<keyword id="KW-0547">Nucleotide-binding</keyword>
<keyword id="KW-0658">Purine biosynthesis</keyword>
<gene>
    <name evidence="1" type="primary">guaAB</name>
    <name type="ordered locus">YG5714_2261</name>
</gene>
<comment type="function">
    <text evidence="1">Catalyzes the synthesis of GMP from XMP.</text>
</comment>
<comment type="catalytic activity">
    <reaction evidence="1">
        <text>XMP + L-glutamine + ATP + H2O = GMP + L-glutamate + AMP + diphosphate + 2 H(+)</text>
        <dbReference type="Rhea" id="RHEA:11680"/>
        <dbReference type="ChEBI" id="CHEBI:15377"/>
        <dbReference type="ChEBI" id="CHEBI:15378"/>
        <dbReference type="ChEBI" id="CHEBI:29985"/>
        <dbReference type="ChEBI" id="CHEBI:30616"/>
        <dbReference type="ChEBI" id="CHEBI:33019"/>
        <dbReference type="ChEBI" id="CHEBI:57464"/>
        <dbReference type="ChEBI" id="CHEBI:58115"/>
        <dbReference type="ChEBI" id="CHEBI:58359"/>
        <dbReference type="ChEBI" id="CHEBI:456215"/>
        <dbReference type="EC" id="6.3.5.2"/>
    </reaction>
</comment>
<comment type="pathway">
    <text evidence="1">Purine metabolism; GMP biosynthesis; GMP from XMP (L-Gln route): step 1/1.</text>
</comment>
<comment type="subunit">
    <text evidence="1">Heterodimer composed of a glutamine amidotransferase subunit (A) and a GMP-binding subunit (B).</text>
</comment>
<reference key="1">
    <citation type="journal article" date="2009" name="Proc. Natl. Acad. Sci. U.S.A.">
        <title>Biogeography of the Sulfolobus islandicus pan-genome.</title>
        <authorList>
            <person name="Reno M.L."/>
            <person name="Held N.L."/>
            <person name="Fields C.J."/>
            <person name="Burke P.V."/>
            <person name="Whitaker R.J."/>
        </authorList>
    </citation>
    <scope>NUCLEOTIDE SEQUENCE [LARGE SCALE GENOMIC DNA]</scope>
    <source>
        <strain>Y.G.57.14 / Yellowstone #1</strain>
    </source>
</reference>
<feature type="chain" id="PRO_1000205319" description="GMP synthase [glutamine-hydrolyzing] subunit B">
    <location>
        <begin position="1"/>
        <end position="367"/>
    </location>
</feature>
<feature type="domain" description="GMPS ATP-PPase" evidence="1">
    <location>
        <begin position="2"/>
        <end position="190"/>
    </location>
</feature>
<feature type="binding site" evidence="1">
    <location>
        <begin position="29"/>
        <end position="35"/>
    </location>
    <ligand>
        <name>ATP</name>
        <dbReference type="ChEBI" id="CHEBI:30616"/>
    </ligand>
</feature>
<sequence>MFDPASFVKEIGPQLKQKVGNERVLAAVSGGVDSTTAAVLAYNLLGNKVIPVLIDTGFLRKNEAEKIKAYLSNVLPNLIVVDERETFTSEIEGMEEAEAKRKKFRELFYSSISSLMRKFNAKYLMQGTIAADWVETQGGIKTQHNVLVQIGIDTEKEWGFTLIEPLADLYKNEVRELARYLKLPKEISERQPFPGPGLLVRTIGKLTREKLEVVREANDIVEKYLDPFNYSQYFAVSFESDGNFVILDGIDAFLYKARATGVKGDVRAYGNIAKVECSDINAAKSFVDTLVKYDITHVLCSLDERSNGKYSIAIRAVITEDFMTADYARIPKEVLEKISSEILQKIPNVKEVLYDVTSKPPATIEFE</sequence>
<protein>
    <recommendedName>
        <fullName evidence="1">GMP synthase [glutamine-hydrolyzing] subunit B</fullName>
        <ecNumber evidence="1">6.3.5.2</ecNumber>
    </recommendedName>
    <alternativeName>
        <fullName evidence="1">GMP synthetase</fullName>
    </alternativeName>
</protein>
<organism>
    <name type="scientific">Saccharolobus islandicus (strain Y.G.57.14 / Yellowstone #1)</name>
    <name type="common">Sulfolobus islandicus</name>
    <dbReference type="NCBI Taxonomy" id="439386"/>
    <lineage>
        <taxon>Archaea</taxon>
        <taxon>Thermoproteota</taxon>
        <taxon>Thermoprotei</taxon>
        <taxon>Sulfolobales</taxon>
        <taxon>Sulfolobaceae</taxon>
        <taxon>Saccharolobus</taxon>
    </lineage>
</organism>